<proteinExistence type="evidence at protein level"/>
<accession>P11116</accession>
<accession>P11945</accession>
<accession>Q54A27</accession>
<protein>
    <recommendedName>
        <fullName>Galectin-1</fullName>
        <shortName>Gal-1</shortName>
    </recommendedName>
    <alternativeName>
        <fullName>14 kDa lectin</fullName>
    </alternativeName>
    <alternativeName>
        <fullName>Beta-galactoside-binding lectin L-14-I</fullName>
    </alternativeName>
    <alternativeName>
        <fullName>Galaptin</fullName>
    </alternativeName>
    <alternativeName>
        <fullName>Lactose-binding lectin 1</fullName>
    </alternativeName>
    <alternativeName>
        <fullName>Lectin galactoside-binding soluble 1</fullName>
    </alternativeName>
    <alternativeName>
        <fullName>S-Lac lectin 1</fullName>
    </alternativeName>
</protein>
<dbReference type="EMBL" id="X14330">
    <property type="protein sequence ID" value="CAA32508.1"/>
    <property type="molecule type" value="mRNA"/>
</dbReference>
<dbReference type="EMBL" id="AB099039">
    <property type="protein sequence ID" value="BAC56529.1"/>
    <property type="molecule type" value="mRNA"/>
</dbReference>
<dbReference type="EMBL" id="BC103156">
    <property type="protein sequence ID" value="AAI03157.1"/>
    <property type="molecule type" value="mRNA"/>
</dbReference>
<dbReference type="PIR" id="S03865">
    <property type="entry name" value="LNBOGB"/>
</dbReference>
<dbReference type="RefSeq" id="NP_786976.1">
    <property type="nucleotide sequence ID" value="NM_175782.1"/>
</dbReference>
<dbReference type="PDB" id="1SLA">
    <property type="method" value="X-ray"/>
    <property type="resolution" value="2.45 A"/>
    <property type="chains" value="A/B=2-135"/>
</dbReference>
<dbReference type="PDB" id="1SLB">
    <property type="method" value="X-ray"/>
    <property type="resolution" value="2.30 A"/>
    <property type="chains" value="A/B/C/D=2-135"/>
</dbReference>
<dbReference type="PDB" id="1SLC">
    <property type="method" value="X-ray"/>
    <property type="resolution" value="2.15 A"/>
    <property type="chains" value="A/B/C/D=2-135"/>
</dbReference>
<dbReference type="PDB" id="1SLT">
    <property type="method" value="X-ray"/>
    <property type="resolution" value="1.90 A"/>
    <property type="chains" value="A/B=2-135"/>
</dbReference>
<dbReference type="PDBsum" id="1SLA"/>
<dbReference type="PDBsum" id="1SLB"/>
<dbReference type="PDBsum" id="1SLC"/>
<dbReference type="PDBsum" id="1SLT"/>
<dbReference type="SMR" id="P11116"/>
<dbReference type="FunCoup" id="P11116">
    <property type="interactions" value="528"/>
</dbReference>
<dbReference type="STRING" id="9913.ENSBTAP00000020080"/>
<dbReference type="UniLectin" id="P11116"/>
<dbReference type="PaxDb" id="9913-ENSBTAP00000020080"/>
<dbReference type="PeptideAtlas" id="P11116"/>
<dbReference type="Ensembl" id="ENSBTAT00000020080.6">
    <property type="protein sequence ID" value="ENSBTAP00000020080.5"/>
    <property type="gene ID" value="ENSBTAG00000015089.7"/>
</dbReference>
<dbReference type="GeneID" id="326598"/>
<dbReference type="KEGG" id="bta:326598"/>
<dbReference type="CTD" id="3956"/>
<dbReference type="VEuPathDB" id="HostDB:ENSBTAG00000015089"/>
<dbReference type="VGNC" id="VGNC:30850">
    <property type="gene designation" value="LGALS1"/>
</dbReference>
<dbReference type="eggNOG" id="KOG3587">
    <property type="taxonomic scope" value="Eukaryota"/>
</dbReference>
<dbReference type="GeneTree" id="ENSGT00940000155534"/>
<dbReference type="HOGENOM" id="CLU_037794_5_0_1"/>
<dbReference type="InParanoid" id="P11116"/>
<dbReference type="OMA" id="IKCMAFE"/>
<dbReference type="OrthoDB" id="8443340at2759"/>
<dbReference type="TreeFam" id="TF315551"/>
<dbReference type="Reactome" id="R-BTA-381426">
    <property type="pathway name" value="Regulation of Insulin-like Growth Factor (IGF) transport and uptake by Insulin-like Growth Factor Binding Proteins (IGFBPs)"/>
</dbReference>
<dbReference type="Reactome" id="R-BTA-8957275">
    <property type="pathway name" value="Post-translational protein phosphorylation"/>
</dbReference>
<dbReference type="EvolutionaryTrace" id="P11116"/>
<dbReference type="Proteomes" id="UP000009136">
    <property type="component" value="Chromosome 5"/>
</dbReference>
<dbReference type="Bgee" id="ENSBTAG00000015089">
    <property type="expression patterns" value="Expressed in pons and 107 other cell types or tissues"/>
</dbReference>
<dbReference type="GO" id="GO:0005737">
    <property type="term" value="C:cytoplasm"/>
    <property type="evidence" value="ECO:0007669"/>
    <property type="project" value="UniProtKB-SubCell"/>
</dbReference>
<dbReference type="GO" id="GO:0005615">
    <property type="term" value="C:extracellular space"/>
    <property type="evidence" value="ECO:0000318"/>
    <property type="project" value="GO_Central"/>
</dbReference>
<dbReference type="GO" id="GO:0030395">
    <property type="term" value="F:lactose binding"/>
    <property type="evidence" value="ECO:0000318"/>
    <property type="project" value="GO_Central"/>
</dbReference>
<dbReference type="GO" id="GO:0043236">
    <property type="term" value="F:laminin binding"/>
    <property type="evidence" value="ECO:0000318"/>
    <property type="project" value="GO_Central"/>
</dbReference>
<dbReference type="GO" id="GO:0006915">
    <property type="term" value="P:apoptotic process"/>
    <property type="evidence" value="ECO:0007669"/>
    <property type="project" value="UniProtKB-KW"/>
</dbReference>
<dbReference type="CDD" id="cd00070">
    <property type="entry name" value="GLECT"/>
    <property type="match status" value="1"/>
</dbReference>
<dbReference type="FunFam" id="2.60.120.200:FF:000021">
    <property type="entry name" value="Galectin"/>
    <property type="match status" value="1"/>
</dbReference>
<dbReference type="Gene3D" id="2.60.120.200">
    <property type="match status" value="1"/>
</dbReference>
<dbReference type="InterPro" id="IPR013320">
    <property type="entry name" value="ConA-like_dom_sf"/>
</dbReference>
<dbReference type="InterPro" id="IPR044156">
    <property type="entry name" value="Galectin-like"/>
</dbReference>
<dbReference type="InterPro" id="IPR001079">
    <property type="entry name" value="Galectin_CRD"/>
</dbReference>
<dbReference type="PANTHER" id="PTHR11346">
    <property type="entry name" value="GALECTIN"/>
    <property type="match status" value="1"/>
</dbReference>
<dbReference type="PANTHER" id="PTHR11346:SF97">
    <property type="entry name" value="GALECTIN-1"/>
    <property type="match status" value="1"/>
</dbReference>
<dbReference type="Pfam" id="PF00337">
    <property type="entry name" value="Gal-bind_lectin"/>
    <property type="match status" value="1"/>
</dbReference>
<dbReference type="SMART" id="SM00908">
    <property type="entry name" value="Gal-bind_lectin"/>
    <property type="match status" value="1"/>
</dbReference>
<dbReference type="SMART" id="SM00276">
    <property type="entry name" value="GLECT"/>
    <property type="match status" value="1"/>
</dbReference>
<dbReference type="SUPFAM" id="SSF49899">
    <property type="entry name" value="Concanavalin A-like lectins/glucanases"/>
    <property type="match status" value="1"/>
</dbReference>
<dbReference type="PROSITE" id="PS51304">
    <property type="entry name" value="GALECTIN"/>
    <property type="match status" value="1"/>
</dbReference>
<gene>
    <name type="primary">LGALS1</name>
</gene>
<evidence type="ECO:0000250" key="1"/>
<evidence type="ECO:0000250" key="2">
    <source>
        <dbReference type="UniProtKB" id="P09382"/>
    </source>
</evidence>
<evidence type="ECO:0000250" key="3">
    <source>
        <dbReference type="UniProtKB" id="P16045"/>
    </source>
</evidence>
<evidence type="ECO:0000255" key="4">
    <source>
        <dbReference type="PROSITE-ProRule" id="PRU00639"/>
    </source>
</evidence>
<evidence type="ECO:0000269" key="5">
    <source>
    </source>
</evidence>
<evidence type="ECO:0000269" key="6">
    <source>
    </source>
</evidence>
<evidence type="ECO:0000269" key="7">
    <source>
    </source>
</evidence>
<evidence type="ECO:0000269" key="8">
    <source>
    </source>
</evidence>
<evidence type="ECO:0007829" key="9">
    <source>
        <dbReference type="PDB" id="1SLC"/>
    </source>
</evidence>
<evidence type="ECO:0007829" key="10">
    <source>
        <dbReference type="PDB" id="1SLT"/>
    </source>
</evidence>
<reference key="1">
    <citation type="journal article" date="1989" name="Biochem. J.">
        <title>Soluble bovine galactose-binding lectin. cDNA cloning reveals the complete amino acid sequence and an antigenic relationship with the major encephalitogenic domain of myelin basic protein.</title>
        <authorList>
            <person name="Abbott W.M."/>
            <person name="Mellor A."/>
            <person name="Edwards Y."/>
            <person name="Feizi T."/>
        </authorList>
    </citation>
    <scope>NUCLEOTIDE SEQUENCE [MRNA]</scope>
    <source>
        <tissue>Trachea</tissue>
    </source>
</reference>
<reference key="2">
    <citation type="journal article" date="2003" name="Mol. Reprod. Dev.">
        <title>Characterization of gene expression profiles in early bovine pregnancy using a custom cDNA microarray.</title>
        <authorList>
            <person name="Ishiwata H."/>
            <person name="Katsuma S."/>
            <person name="Kizaki K."/>
            <person name="Patel O.V."/>
            <person name="Nakano H."/>
            <person name="Takahashi T."/>
            <person name="Imai K."/>
            <person name="Hirasawa A."/>
            <person name="Shiojima S."/>
            <person name="Ikawa H."/>
            <person name="Suzuki Y."/>
            <person name="Tsujimoto G."/>
            <person name="Izaike Y."/>
            <person name="Todoroki J."/>
            <person name="Hashizume K."/>
        </authorList>
    </citation>
    <scope>NUCLEOTIDE SEQUENCE [LARGE SCALE MRNA]</scope>
</reference>
<reference key="3">
    <citation type="submission" date="2005-08" db="EMBL/GenBank/DDBJ databases">
        <authorList>
            <consortium name="NIH - Mammalian Gene Collection (MGC) project"/>
        </authorList>
    </citation>
    <scope>NUCLEOTIDE SEQUENCE [LARGE SCALE MRNA]</scope>
    <source>
        <strain>Hereford</strain>
        <tissue>Heart ventricle</tissue>
    </source>
</reference>
<reference key="4">
    <citation type="journal article" date="1987" name="FEBS Lett.">
        <title>Amino acid sequence of beta-galactoside-binding bovine heart lectin. Member of a novel class of vertebrate proteins.</title>
        <authorList>
            <person name="Southan C."/>
            <person name="Aitken A."/>
            <person name="Childs R.A."/>
            <person name="Abbott W.M."/>
            <person name="Feizi T."/>
        </authorList>
    </citation>
    <scope>PRELIMINARY PROTEIN SEQUENCE OF 11-134</scope>
    <source>
        <tissue>Heart</tissue>
    </source>
</reference>
<reference key="5">
    <citation type="journal article" date="1991" name="J. Biol. Chem.">
        <title>Soluble 14-kDa beta-galactoside-specific bovine lectin. Evidence from mutagenesis and proteolysis that almost the complete polypeptide chain is necessary for integrity of the carbohydrate recognition domain.</title>
        <authorList>
            <person name="Abbott W.M."/>
            <person name="Feizi T."/>
        </authorList>
    </citation>
    <scope>MUTAGENESIS</scope>
    <scope>FUNCTION</scope>
    <source>
        <tissue>Heart</tissue>
    </source>
</reference>
<reference key="6">
    <citation type="journal article" date="1992" name="J. Biol. Chem.">
        <title>Subunit molecular mass assignment of 14,654 Da to the soluble beta-galactoside-binding lectin from bovine heart muscle and demonstration of intramolecular disulfide bonding associated with oxidative inactivation.</title>
        <authorList>
            <person name="Tracey B.M."/>
            <person name="Feizi T."/>
            <person name="Abbott W.M."/>
            <person name="Carruthers R.A."/>
            <person name="Green B.N."/>
            <person name="Lawson A.M."/>
        </authorList>
    </citation>
    <scope>CHARACTERIZATION</scope>
    <scope>MASS SPECTROMETRY</scope>
    <source>
        <tissue>Heart</tissue>
    </source>
</reference>
<reference key="7">
    <citation type="journal article" date="1994" name="Proc. Natl. Acad. Sci. U.S.A.">
        <title>Structure of S-lectin, a developmentally regulated vertebrate beta-galactoside-binding protein.</title>
        <authorList>
            <person name="Liao D.-I."/>
            <person name="Kapadia G."/>
            <person name="Ahmed H."/>
            <person name="Vasta G.R."/>
            <person name="Herzberg O."/>
        </authorList>
    </citation>
    <scope>X-RAY CRYSTALLOGRAPHY (1.9 ANGSTROMS) IN COMPLEX WITH CARBOHYDRATE</scope>
    <scope>FUNCTION</scope>
    <source>
        <tissue>Spleen</tissue>
    </source>
</reference>
<reference key="8">
    <citation type="journal article" date="1994" name="Nat. Struct. Biol.">
        <title>Crosslinking of mammalian lectin (galectin-1) by complex biantennary saccharides.</title>
        <authorList>
            <person name="Bourne Y."/>
            <person name="Bolgiano B."/>
            <person name="Liao D.-I."/>
            <person name="Strecker G."/>
            <person name="Cantau P."/>
            <person name="Herzberg O."/>
            <person name="Feizi T."/>
            <person name="Cambillau C."/>
        </authorList>
    </citation>
    <scope>X-RAY CRYSTALLOGRAPHY (2.45 ANGSTROMS) IN COMPLEX WITH CARBOHYDRATE</scope>
    <scope>FUNCTION</scope>
</reference>
<sequence length="135" mass="14744">MACGLVASNLNLKPGECLRVRGEVAADAKSFLLNLGKDDNNLCLHFNPRFNAHGDVNTIVCNSKDAGAWGAEQRESAFPFQPGSVVEVCISFNQTDLTIKLPDGYEFKFPNRLNLEAINYLSAGGDFKIKCVAFE</sequence>
<comment type="function">
    <text evidence="2 6 7 8">Lectin that binds beta-galactoside and a wide array of complex carbohydrates (PubMed:1900835, PubMed:7773775, PubMed:8108426). Plays a role in regulating apoptosis, cell proliferation and cell differentiation. Inhibits CD45 protein phosphatase activity and therefore the dephosphorylation of Lyn kinase. Strong inducer of T-cell apoptosis.</text>
</comment>
<comment type="subunit">
    <text evidence="2">Homodimer. Binds LGALS3BP. Interacts with CD2, CD3, CD4, CD6, CD7, CD43, ALCAM and CD45. Interacts with laminin (via poly-N-acetyllactosamine). Interacts with SUSD2. Interacts with cargo receptor TMED10; the interaction mediates the translocation from the cytoplasm into the ERGIC (endoplasmic reticulum-Golgi intermediate compartment) and thereby secretion.</text>
</comment>
<comment type="subcellular location">
    <subcellularLocation>
        <location evidence="2">Secreted</location>
        <location evidence="2">Extracellular space</location>
        <location evidence="2">Extracellular matrix</location>
    </subcellularLocation>
    <subcellularLocation>
        <location evidence="2">Cytoplasm</location>
    </subcellularLocation>
    <subcellularLocation>
        <location evidence="2">Secreted</location>
    </subcellularLocation>
    <text evidence="2">Can be secreted; the secretion is dependent on protein unfolding and facilitated by the cargo receptor TMED10; it results in protein translocation from the cytoplasm into the ERGIC (endoplasmic reticulum-Golgi intermediate compartment) followed by vesicle entry and secretion.</text>
</comment>
<comment type="mass spectrometry" mass="14654.6" error="0.9" method="Electrospray" evidence="5"/>
<name>LEG1_BOVIN</name>
<feature type="initiator methionine" description="Removed" evidence="2">
    <location>
        <position position="1"/>
    </location>
</feature>
<feature type="chain" id="PRO_0000076915" description="Galectin-1">
    <location>
        <begin position="2"/>
        <end position="135"/>
    </location>
</feature>
<feature type="domain" description="Galectin" evidence="4">
    <location>
        <begin position="4"/>
        <end position="135"/>
    </location>
</feature>
<feature type="binding site" evidence="1">
    <location>
        <begin position="45"/>
        <end position="49"/>
    </location>
    <ligand>
        <name>a beta-D-galactoside</name>
        <dbReference type="ChEBI" id="CHEBI:28034"/>
    </ligand>
</feature>
<feature type="binding site" evidence="1">
    <location>
        <position position="53"/>
    </location>
    <ligand>
        <name>a beta-D-galactoside</name>
        <dbReference type="ChEBI" id="CHEBI:28034"/>
    </ligand>
</feature>
<feature type="binding site" evidence="1">
    <location>
        <position position="62"/>
    </location>
    <ligand>
        <name>a beta-D-galactoside</name>
        <dbReference type="ChEBI" id="CHEBI:28034"/>
    </ligand>
</feature>
<feature type="binding site" evidence="1">
    <location>
        <begin position="69"/>
        <end position="72"/>
    </location>
    <ligand>
        <name>a beta-D-galactoside</name>
        <dbReference type="ChEBI" id="CHEBI:28034"/>
    </ligand>
</feature>
<feature type="modified residue" description="N-acetylalanine" evidence="2">
    <location>
        <position position="2"/>
    </location>
</feature>
<feature type="modified residue" description="N6-acetyllysine" evidence="3">
    <location>
        <position position="13"/>
    </location>
</feature>
<feature type="modified residue" description="N6-acetyllysine" evidence="2">
    <location>
        <position position="29"/>
    </location>
</feature>
<feature type="modified residue" description="Phosphoserine" evidence="2">
    <location>
        <position position="30"/>
    </location>
</feature>
<feature type="modified residue" description="N6-acetyllysine; alternate" evidence="3">
    <location>
        <position position="108"/>
    </location>
</feature>
<feature type="modified residue" description="N6-succinyllysine; alternate" evidence="3">
    <location>
        <position position="108"/>
    </location>
</feature>
<feature type="modified residue" description="N6-acetyllysine" evidence="3">
    <location>
        <position position="128"/>
    </location>
</feature>
<feature type="mutagenesis site" description="Reduced carbohydrate binding." evidence="6">
    <original>W</original>
    <variation>F</variation>
    <location>
        <position position="69"/>
    </location>
</feature>
<feature type="mutagenesis site" description="No carbohydrate binding." evidence="6">
    <original>W</original>
    <variation>L</variation>
    <location>
        <position position="69"/>
    </location>
</feature>
<feature type="strand" evidence="10">
    <location>
        <begin position="6"/>
        <end position="9"/>
    </location>
</feature>
<feature type="strand" evidence="10">
    <location>
        <begin position="17"/>
        <end position="24"/>
    </location>
</feature>
<feature type="strand" evidence="10">
    <location>
        <begin position="30"/>
        <end position="38"/>
    </location>
</feature>
<feature type="strand" evidence="10">
    <location>
        <begin position="41"/>
        <end position="52"/>
    </location>
</feature>
<feature type="strand" evidence="10">
    <location>
        <begin position="55"/>
        <end position="65"/>
    </location>
</feature>
<feature type="strand" evidence="10">
    <location>
        <begin position="73"/>
        <end position="75"/>
    </location>
</feature>
<feature type="strand" evidence="10">
    <location>
        <begin position="85"/>
        <end position="92"/>
    </location>
</feature>
<feature type="strand" evidence="10">
    <location>
        <begin position="94"/>
        <end position="100"/>
    </location>
</feature>
<feature type="helix" evidence="9">
    <location>
        <begin position="102"/>
        <end position="104"/>
    </location>
</feature>
<feature type="strand" evidence="10">
    <location>
        <begin position="106"/>
        <end position="110"/>
    </location>
</feature>
<feature type="strand" evidence="10">
    <location>
        <begin position="120"/>
        <end position="135"/>
    </location>
</feature>
<organism>
    <name type="scientific">Bos taurus</name>
    <name type="common">Bovine</name>
    <dbReference type="NCBI Taxonomy" id="9913"/>
    <lineage>
        <taxon>Eukaryota</taxon>
        <taxon>Metazoa</taxon>
        <taxon>Chordata</taxon>
        <taxon>Craniata</taxon>
        <taxon>Vertebrata</taxon>
        <taxon>Euteleostomi</taxon>
        <taxon>Mammalia</taxon>
        <taxon>Eutheria</taxon>
        <taxon>Laurasiatheria</taxon>
        <taxon>Artiodactyla</taxon>
        <taxon>Ruminantia</taxon>
        <taxon>Pecora</taxon>
        <taxon>Bovidae</taxon>
        <taxon>Bovinae</taxon>
        <taxon>Bos</taxon>
    </lineage>
</organism>
<keyword id="KW-0002">3D-structure</keyword>
<keyword id="KW-0007">Acetylation</keyword>
<keyword id="KW-0053">Apoptosis</keyword>
<keyword id="KW-0963">Cytoplasm</keyword>
<keyword id="KW-0903">Direct protein sequencing</keyword>
<keyword id="KW-0272">Extracellular matrix</keyword>
<keyword id="KW-0430">Lectin</keyword>
<keyword id="KW-0597">Phosphoprotein</keyword>
<keyword id="KW-1185">Reference proteome</keyword>
<keyword id="KW-0964">Secreted</keyword>